<accession>B1IEF5</accession>
<keyword id="KW-0031">Aminopeptidase</keyword>
<keyword id="KW-0963">Cytoplasm</keyword>
<keyword id="KW-0378">Hydrolase</keyword>
<keyword id="KW-0479">Metal-binding</keyword>
<keyword id="KW-0482">Metalloprotease</keyword>
<keyword id="KW-0645">Protease</keyword>
<keyword id="KW-0862">Zinc</keyword>
<sequence>MKDVLERFLGYIKVDTQSSEESDTVPTTKTQLEFAKKLGEELKAIGLKDVSVDESGYVMATLESNIDKKVPAIGFIAHMDTSPDLSGTNINPRIVEKYDGQDIVLNKEKNIVLKINEFPEILEYKGQDIVVTDGNTLLGADDKAGIAEIITAMEYLINHPEIKHGTIKVGFTPDEEVGKGADHFDVKKFGADLAYTLDGGGIGELECETFNAAKAKVIIEGRNVHPGSAKNKMTNAVLVANKFINTLPENEVPERTEGYEGFFHLLSVKSEVETAELNYIIRDFDRKKFEERKEQIKEVGKKINEEYNKEIVCVKVEDQYYNMKEKIDEVKYVVDIAYDAMKAIDIEPILVPIRGGTDGSRLSFMGLPTPNLFAGGHNFHGRFEFVPVLSMEKAAELVVKIAELYANR</sequence>
<name>PEPT_CLOBK</name>
<comment type="function">
    <text evidence="1">Cleaves the N-terminal amino acid of tripeptides.</text>
</comment>
<comment type="catalytic activity">
    <reaction evidence="1">
        <text>Release of the N-terminal residue from a tripeptide.</text>
        <dbReference type="EC" id="3.4.11.4"/>
    </reaction>
</comment>
<comment type="cofactor">
    <cofactor evidence="1">
        <name>Zn(2+)</name>
        <dbReference type="ChEBI" id="CHEBI:29105"/>
    </cofactor>
    <text evidence="1">Binds 2 Zn(2+) ions per subunit.</text>
</comment>
<comment type="subcellular location">
    <subcellularLocation>
        <location evidence="1">Cytoplasm</location>
    </subcellularLocation>
</comment>
<comment type="similarity">
    <text evidence="1">Belongs to the peptidase M20B family.</text>
</comment>
<organism>
    <name type="scientific">Clostridium botulinum (strain Okra / Type B1)</name>
    <dbReference type="NCBI Taxonomy" id="498213"/>
    <lineage>
        <taxon>Bacteria</taxon>
        <taxon>Bacillati</taxon>
        <taxon>Bacillota</taxon>
        <taxon>Clostridia</taxon>
        <taxon>Eubacteriales</taxon>
        <taxon>Clostridiaceae</taxon>
        <taxon>Clostridium</taxon>
    </lineage>
</organism>
<proteinExistence type="inferred from homology"/>
<protein>
    <recommendedName>
        <fullName evidence="1">Peptidase T</fullName>
        <ecNumber evidence="1">3.4.11.4</ecNumber>
    </recommendedName>
    <alternativeName>
        <fullName evidence="1">Aminotripeptidase</fullName>
        <shortName evidence="1">Tripeptidase</shortName>
    </alternativeName>
    <alternativeName>
        <fullName evidence="1">Tripeptide aminopeptidase</fullName>
    </alternativeName>
</protein>
<gene>
    <name evidence="1" type="primary">pepT</name>
    <name type="ordered locus">CLD_0304</name>
</gene>
<evidence type="ECO:0000255" key="1">
    <source>
        <dbReference type="HAMAP-Rule" id="MF_00550"/>
    </source>
</evidence>
<reference key="1">
    <citation type="journal article" date="2007" name="PLoS ONE">
        <title>Analysis of the neurotoxin complex genes in Clostridium botulinum A1-A4 and B1 strains: BoNT/A3, /Ba4 and /B1 clusters are located within plasmids.</title>
        <authorList>
            <person name="Smith T.J."/>
            <person name="Hill K.K."/>
            <person name="Foley B.T."/>
            <person name="Detter J.C."/>
            <person name="Munk A.C."/>
            <person name="Bruce D.C."/>
            <person name="Doggett N.A."/>
            <person name="Smith L.A."/>
            <person name="Marks J.D."/>
            <person name="Xie G."/>
            <person name="Brettin T.S."/>
        </authorList>
    </citation>
    <scope>NUCLEOTIDE SEQUENCE [LARGE SCALE GENOMIC DNA]</scope>
    <source>
        <strain>Okra / Type B1</strain>
    </source>
</reference>
<dbReference type="EC" id="3.4.11.4" evidence="1"/>
<dbReference type="EMBL" id="CP000939">
    <property type="protein sequence ID" value="ACA46344.1"/>
    <property type="molecule type" value="Genomic_DNA"/>
</dbReference>
<dbReference type="RefSeq" id="WP_003399610.1">
    <property type="nucleotide sequence ID" value="NC_010516.1"/>
</dbReference>
<dbReference type="SMR" id="B1IEF5"/>
<dbReference type="MEROPS" id="M20.003"/>
<dbReference type="KEGG" id="cbb:CLD_0304"/>
<dbReference type="HOGENOM" id="CLU_053676_0_0_9"/>
<dbReference type="Proteomes" id="UP000008541">
    <property type="component" value="Chromosome"/>
</dbReference>
<dbReference type="GO" id="GO:0005829">
    <property type="term" value="C:cytosol"/>
    <property type="evidence" value="ECO:0007669"/>
    <property type="project" value="TreeGrafter"/>
</dbReference>
<dbReference type="GO" id="GO:0008237">
    <property type="term" value="F:metallopeptidase activity"/>
    <property type="evidence" value="ECO:0007669"/>
    <property type="project" value="UniProtKB-KW"/>
</dbReference>
<dbReference type="GO" id="GO:0045148">
    <property type="term" value="F:tripeptide aminopeptidase activity"/>
    <property type="evidence" value="ECO:0007669"/>
    <property type="project" value="UniProtKB-UniRule"/>
</dbReference>
<dbReference type="GO" id="GO:0008270">
    <property type="term" value="F:zinc ion binding"/>
    <property type="evidence" value="ECO:0007669"/>
    <property type="project" value="UniProtKB-UniRule"/>
</dbReference>
<dbReference type="GO" id="GO:0043171">
    <property type="term" value="P:peptide catabolic process"/>
    <property type="evidence" value="ECO:0007669"/>
    <property type="project" value="UniProtKB-UniRule"/>
</dbReference>
<dbReference type="GO" id="GO:0006508">
    <property type="term" value="P:proteolysis"/>
    <property type="evidence" value="ECO:0007669"/>
    <property type="project" value="UniProtKB-UniRule"/>
</dbReference>
<dbReference type="CDD" id="cd03892">
    <property type="entry name" value="M20_peptT"/>
    <property type="match status" value="1"/>
</dbReference>
<dbReference type="FunFam" id="3.30.70.360:FF:000002">
    <property type="entry name" value="Peptidase T"/>
    <property type="match status" value="1"/>
</dbReference>
<dbReference type="Gene3D" id="3.30.70.360">
    <property type="match status" value="1"/>
</dbReference>
<dbReference type="Gene3D" id="3.40.630.10">
    <property type="entry name" value="Zn peptidases"/>
    <property type="match status" value="1"/>
</dbReference>
<dbReference type="HAMAP" id="MF_00550">
    <property type="entry name" value="Aminopeptidase_M20"/>
    <property type="match status" value="1"/>
</dbReference>
<dbReference type="InterPro" id="IPR001261">
    <property type="entry name" value="ArgE/DapE_CS"/>
</dbReference>
<dbReference type="InterPro" id="IPR036264">
    <property type="entry name" value="Bact_exopeptidase_dim_dom"/>
</dbReference>
<dbReference type="InterPro" id="IPR002933">
    <property type="entry name" value="Peptidase_M20"/>
</dbReference>
<dbReference type="InterPro" id="IPR011650">
    <property type="entry name" value="Peptidase_M20_dimer"/>
</dbReference>
<dbReference type="InterPro" id="IPR010161">
    <property type="entry name" value="Peptidase_M20B"/>
</dbReference>
<dbReference type="NCBIfam" id="TIGR01882">
    <property type="entry name" value="peptidase-T"/>
    <property type="match status" value="1"/>
</dbReference>
<dbReference type="NCBIfam" id="NF003976">
    <property type="entry name" value="PRK05469.1"/>
    <property type="match status" value="1"/>
</dbReference>
<dbReference type="NCBIfam" id="NF009920">
    <property type="entry name" value="PRK13381.1"/>
    <property type="match status" value="1"/>
</dbReference>
<dbReference type="PANTHER" id="PTHR42994">
    <property type="entry name" value="PEPTIDASE T"/>
    <property type="match status" value="1"/>
</dbReference>
<dbReference type="PANTHER" id="PTHR42994:SF1">
    <property type="entry name" value="PEPTIDASE T"/>
    <property type="match status" value="1"/>
</dbReference>
<dbReference type="Pfam" id="PF07687">
    <property type="entry name" value="M20_dimer"/>
    <property type="match status" value="1"/>
</dbReference>
<dbReference type="Pfam" id="PF01546">
    <property type="entry name" value="Peptidase_M20"/>
    <property type="match status" value="1"/>
</dbReference>
<dbReference type="PIRSF" id="PIRSF037215">
    <property type="entry name" value="Peptidase_M20B"/>
    <property type="match status" value="1"/>
</dbReference>
<dbReference type="SUPFAM" id="SSF55031">
    <property type="entry name" value="Bacterial exopeptidase dimerisation domain"/>
    <property type="match status" value="1"/>
</dbReference>
<dbReference type="SUPFAM" id="SSF53187">
    <property type="entry name" value="Zn-dependent exopeptidases"/>
    <property type="match status" value="1"/>
</dbReference>
<dbReference type="PROSITE" id="PS00758">
    <property type="entry name" value="ARGE_DAPE_CPG2_1"/>
    <property type="match status" value="1"/>
</dbReference>
<dbReference type="PROSITE" id="PS00759">
    <property type="entry name" value="ARGE_DAPE_CPG2_2"/>
    <property type="match status" value="1"/>
</dbReference>
<feature type="chain" id="PRO_1000129025" description="Peptidase T">
    <location>
        <begin position="1"/>
        <end position="408"/>
    </location>
</feature>
<feature type="active site" evidence="1">
    <location>
        <position position="80"/>
    </location>
</feature>
<feature type="active site" description="Proton acceptor" evidence="1">
    <location>
        <position position="175"/>
    </location>
</feature>
<feature type="binding site" evidence="1">
    <location>
        <position position="78"/>
    </location>
    <ligand>
        <name>Zn(2+)</name>
        <dbReference type="ChEBI" id="CHEBI:29105"/>
        <label>1</label>
    </ligand>
</feature>
<feature type="binding site" evidence="1">
    <location>
        <position position="141"/>
    </location>
    <ligand>
        <name>Zn(2+)</name>
        <dbReference type="ChEBI" id="CHEBI:29105"/>
        <label>1</label>
    </ligand>
</feature>
<feature type="binding site" evidence="1">
    <location>
        <position position="141"/>
    </location>
    <ligand>
        <name>Zn(2+)</name>
        <dbReference type="ChEBI" id="CHEBI:29105"/>
        <label>2</label>
    </ligand>
</feature>
<feature type="binding site" evidence="1">
    <location>
        <position position="176"/>
    </location>
    <ligand>
        <name>Zn(2+)</name>
        <dbReference type="ChEBI" id="CHEBI:29105"/>
        <label>2</label>
    </ligand>
</feature>
<feature type="binding site" evidence="1">
    <location>
        <position position="198"/>
    </location>
    <ligand>
        <name>Zn(2+)</name>
        <dbReference type="ChEBI" id="CHEBI:29105"/>
        <label>1</label>
    </ligand>
</feature>
<feature type="binding site" evidence="1">
    <location>
        <position position="380"/>
    </location>
    <ligand>
        <name>Zn(2+)</name>
        <dbReference type="ChEBI" id="CHEBI:29105"/>
        <label>2</label>
    </ligand>
</feature>